<dbReference type="EMBL" id="CU329670">
    <property type="protein sequence ID" value="CAB60016.1"/>
    <property type="molecule type" value="Genomic_DNA"/>
</dbReference>
<dbReference type="PIR" id="T39117">
    <property type="entry name" value="T39117"/>
</dbReference>
<dbReference type="SMR" id="Q9URY9"/>
<dbReference type="BioGRID" id="279567">
    <property type="interactions" value="6"/>
</dbReference>
<dbReference type="STRING" id="284812.Q9URY9"/>
<dbReference type="PaxDb" id="4896-SPAC869.06c.1"/>
<dbReference type="EnsemblFungi" id="SPAC869.06c.1">
    <property type="protein sequence ID" value="SPAC869.06c.1:pep"/>
    <property type="gene ID" value="SPAC869.06c"/>
</dbReference>
<dbReference type="KEGG" id="spo:2543135"/>
<dbReference type="PomBase" id="SPAC869.06c"/>
<dbReference type="VEuPathDB" id="FungiDB:SPAC869.06c"/>
<dbReference type="eggNOG" id="ENOG502S054">
    <property type="taxonomic scope" value="Eukaryota"/>
</dbReference>
<dbReference type="HOGENOM" id="CLU_079417_0_0_1"/>
<dbReference type="InParanoid" id="Q9URY9"/>
<dbReference type="OMA" id="AVMDMGR"/>
<dbReference type="PhylomeDB" id="Q9URY9"/>
<dbReference type="PRO" id="PR:Q9URY9"/>
<dbReference type="Proteomes" id="UP000002485">
    <property type="component" value="Chromosome I"/>
</dbReference>
<dbReference type="GO" id="GO:0005739">
    <property type="term" value="C:mitochondrion"/>
    <property type="evidence" value="ECO:0007669"/>
    <property type="project" value="UniProtKB-SubCell"/>
</dbReference>
<dbReference type="GO" id="GO:0043169">
    <property type="term" value="F:cation binding"/>
    <property type="evidence" value="ECO:0000255"/>
    <property type="project" value="PomBase"/>
</dbReference>
<dbReference type="GO" id="GO:0046872">
    <property type="term" value="F:metal ion binding"/>
    <property type="evidence" value="ECO:0007669"/>
    <property type="project" value="UniProtKB-KW"/>
</dbReference>
<dbReference type="Gene3D" id="1.20.120.520">
    <property type="entry name" value="nmb1532 protein domain like"/>
    <property type="match status" value="1"/>
</dbReference>
<dbReference type="InterPro" id="IPR012312">
    <property type="entry name" value="Hemerythrin-like"/>
</dbReference>
<dbReference type="PANTHER" id="PTHR35585">
    <property type="entry name" value="HHE DOMAIN PROTEIN (AFU_ORTHOLOGUE AFUA_4G00730)"/>
    <property type="match status" value="1"/>
</dbReference>
<dbReference type="PANTHER" id="PTHR35585:SF1">
    <property type="entry name" value="HHE DOMAIN PROTEIN (AFU_ORTHOLOGUE AFUA_4G00730)"/>
    <property type="match status" value="1"/>
</dbReference>
<dbReference type="Pfam" id="PF01814">
    <property type="entry name" value="Hemerythrin"/>
    <property type="match status" value="1"/>
</dbReference>
<gene>
    <name type="ORF">SPAC869.06c</name>
</gene>
<reference key="1">
    <citation type="journal article" date="2002" name="Nature">
        <title>The genome sequence of Schizosaccharomyces pombe.</title>
        <authorList>
            <person name="Wood V."/>
            <person name="Gwilliam R."/>
            <person name="Rajandream M.A."/>
            <person name="Lyne M.H."/>
            <person name="Lyne R."/>
            <person name="Stewart A."/>
            <person name="Sgouros J.G."/>
            <person name="Peat N."/>
            <person name="Hayles J."/>
            <person name="Baker S.G."/>
            <person name="Basham D."/>
            <person name="Bowman S."/>
            <person name="Brooks K."/>
            <person name="Brown D."/>
            <person name="Brown S."/>
            <person name="Chillingworth T."/>
            <person name="Churcher C.M."/>
            <person name="Collins M."/>
            <person name="Connor R."/>
            <person name="Cronin A."/>
            <person name="Davis P."/>
            <person name="Feltwell T."/>
            <person name="Fraser A."/>
            <person name="Gentles S."/>
            <person name="Goble A."/>
            <person name="Hamlin N."/>
            <person name="Harris D.E."/>
            <person name="Hidalgo J."/>
            <person name="Hodgson G."/>
            <person name="Holroyd S."/>
            <person name="Hornsby T."/>
            <person name="Howarth S."/>
            <person name="Huckle E.J."/>
            <person name="Hunt S."/>
            <person name="Jagels K."/>
            <person name="James K.D."/>
            <person name="Jones L."/>
            <person name="Jones M."/>
            <person name="Leather S."/>
            <person name="McDonald S."/>
            <person name="McLean J."/>
            <person name="Mooney P."/>
            <person name="Moule S."/>
            <person name="Mungall K.L."/>
            <person name="Murphy L.D."/>
            <person name="Niblett D."/>
            <person name="Odell C."/>
            <person name="Oliver K."/>
            <person name="O'Neil S."/>
            <person name="Pearson D."/>
            <person name="Quail M.A."/>
            <person name="Rabbinowitsch E."/>
            <person name="Rutherford K.M."/>
            <person name="Rutter S."/>
            <person name="Saunders D."/>
            <person name="Seeger K."/>
            <person name="Sharp S."/>
            <person name="Skelton J."/>
            <person name="Simmonds M.N."/>
            <person name="Squares R."/>
            <person name="Squares S."/>
            <person name="Stevens K."/>
            <person name="Taylor K."/>
            <person name="Taylor R.G."/>
            <person name="Tivey A."/>
            <person name="Walsh S.V."/>
            <person name="Warren T."/>
            <person name="Whitehead S."/>
            <person name="Woodward J.R."/>
            <person name="Volckaert G."/>
            <person name="Aert R."/>
            <person name="Robben J."/>
            <person name="Grymonprez B."/>
            <person name="Weltjens I."/>
            <person name="Vanstreels E."/>
            <person name="Rieger M."/>
            <person name="Schaefer M."/>
            <person name="Mueller-Auer S."/>
            <person name="Gabel C."/>
            <person name="Fuchs M."/>
            <person name="Duesterhoeft A."/>
            <person name="Fritzc C."/>
            <person name="Holzer E."/>
            <person name="Moestl D."/>
            <person name="Hilbert H."/>
            <person name="Borzym K."/>
            <person name="Langer I."/>
            <person name="Beck A."/>
            <person name="Lehrach H."/>
            <person name="Reinhardt R."/>
            <person name="Pohl T.M."/>
            <person name="Eger P."/>
            <person name="Zimmermann W."/>
            <person name="Wedler H."/>
            <person name="Wambutt R."/>
            <person name="Purnelle B."/>
            <person name="Goffeau A."/>
            <person name="Cadieu E."/>
            <person name="Dreano S."/>
            <person name="Gloux S."/>
            <person name="Lelaure V."/>
            <person name="Mottier S."/>
            <person name="Galibert F."/>
            <person name="Aves S.J."/>
            <person name="Xiang Z."/>
            <person name="Hunt C."/>
            <person name="Moore K."/>
            <person name="Hurst S.M."/>
            <person name="Lucas M."/>
            <person name="Rochet M."/>
            <person name="Gaillardin C."/>
            <person name="Tallada V.A."/>
            <person name="Garzon A."/>
            <person name="Thode G."/>
            <person name="Daga R.R."/>
            <person name="Cruzado L."/>
            <person name="Jimenez J."/>
            <person name="Sanchez M."/>
            <person name="del Rey F."/>
            <person name="Benito J."/>
            <person name="Dominguez A."/>
            <person name="Revuelta J.L."/>
            <person name="Moreno S."/>
            <person name="Armstrong J."/>
            <person name="Forsburg S.L."/>
            <person name="Cerutti L."/>
            <person name="Lowe T."/>
            <person name="McCombie W.R."/>
            <person name="Paulsen I."/>
            <person name="Potashkin J."/>
            <person name="Shpakovski G.V."/>
            <person name="Ussery D."/>
            <person name="Barrell B.G."/>
            <person name="Nurse P."/>
        </authorList>
    </citation>
    <scope>NUCLEOTIDE SEQUENCE [LARGE SCALE GENOMIC DNA]</scope>
    <source>
        <strain>972 / ATCC 24843</strain>
    </source>
</reference>
<reference key="2">
    <citation type="journal article" date="2006" name="Nat. Biotechnol.">
        <title>ORFeome cloning and global analysis of protein localization in the fission yeast Schizosaccharomyces pombe.</title>
        <authorList>
            <person name="Matsuyama A."/>
            <person name="Arai R."/>
            <person name="Yashiroda Y."/>
            <person name="Shirai A."/>
            <person name="Kamata A."/>
            <person name="Sekido S."/>
            <person name="Kobayashi Y."/>
            <person name="Hashimoto A."/>
            <person name="Hamamoto M."/>
            <person name="Hiraoka Y."/>
            <person name="Horinouchi S."/>
            <person name="Yoshida M."/>
        </authorList>
    </citation>
    <scope>SUBCELLULAR LOCATION [LARGE SCALE ANALYSIS]</scope>
</reference>
<feature type="chain" id="PRO_0000317095" description="Uncharacterized hemerythrin-like protein C869.06c">
    <location>
        <begin position="1"/>
        <end position="203"/>
    </location>
</feature>
<feature type="binding site" evidence="1">
    <location>
        <position position="34"/>
    </location>
    <ligand>
        <name>Fe cation</name>
        <dbReference type="ChEBI" id="CHEBI:24875"/>
        <label>1</label>
    </ligand>
</feature>
<feature type="binding site" evidence="1">
    <location>
        <position position="97"/>
    </location>
    <ligand>
        <name>Fe cation</name>
        <dbReference type="ChEBI" id="CHEBI:24875"/>
        <label>1</label>
    </ligand>
</feature>
<feature type="binding site" evidence="1">
    <location>
        <position position="97"/>
    </location>
    <ligand>
        <name>Fe cation</name>
        <dbReference type="ChEBI" id="CHEBI:24875"/>
        <label>2</label>
    </ligand>
</feature>
<feature type="binding site" evidence="1">
    <location>
        <position position="172"/>
    </location>
    <ligand>
        <name>Fe cation</name>
        <dbReference type="ChEBI" id="CHEBI:24875"/>
        <label>2</label>
    </ligand>
</feature>
<protein>
    <recommendedName>
        <fullName>Uncharacterized hemerythrin-like protein C869.06c</fullName>
    </recommendedName>
</protein>
<proteinExistence type="inferred from homology"/>
<sequence length="203" mass="24035">MLQYSKKKVSLNFFPVRLLSYKMTRISDAIFKDHRKLQSDYQNIKSANDYDTATRWQNQFVWELARHSVGEEIVVYPKFEKYLGEEGKEMAEKDRHEHQLVKEMLYKFQSMKANQSNFIPALDELMESLQKHIDEEEQHDIPFLEKHLSEEESLHMASSFERTKKFVPTHSHPSAPNKPPFETVAGLFAAPIDKLRDMMEKWP</sequence>
<name>YI06_SCHPO</name>
<evidence type="ECO:0000250" key="1">
    <source>
        <dbReference type="UniProtKB" id="P02244"/>
    </source>
</evidence>
<evidence type="ECO:0000269" key="2">
    <source>
    </source>
</evidence>
<evidence type="ECO:0000305" key="3"/>
<accession>Q9URY9</accession>
<organism>
    <name type="scientific">Schizosaccharomyces pombe (strain 972 / ATCC 24843)</name>
    <name type="common">Fission yeast</name>
    <dbReference type="NCBI Taxonomy" id="284812"/>
    <lineage>
        <taxon>Eukaryota</taxon>
        <taxon>Fungi</taxon>
        <taxon>Dikarya</taxon>
        <taxon>Ascomycota</taxon>
        <taxon>Taphrinomycotina</taxon>
        <taxon>Schizosaccharomycetes</taxon>
        <taxon>Schizosaccharomycetales</taxon>
        <taxon>Schizosaccharomycetaceae</taxon>
        <taxon>Schizosaccharomyces</taxon>
    </lineage>
</organism>
<comment type="subcellular location">
    <subcellularLocation>
        <location evidence="2">Mitochondrion</location>
    </subcellularLocation>
</comment>
<comment type="similarity">
    <text evidence="3">Belongs to the hemerythrin family.</text>
</comment>
<keyword id="KW-0408">Iron</keyword>
<keyword id="KW-0479">Metal-binding</keyword>
<keyword id="KW-0496">Mitochondrion</keyword>
<keyword id="KW-1185">Reference proteome</keyword>